<protein>
    <recommendedName>
        <fullName evidence="1">NH(3)-dependent NAD(+) synthetase</fullName>
        <ecNumber evidence="1">6.3.1.5</ecNumber>
    </recommendedName>
</protein>
<name>NADE_BUCAT</name>
<dbReference type="EC" id="6.3.1.5" evidence="1"/>
<dbReference type="EMBL" id="CP001158">
    <property type="protein sequence ID" value="ACL29993.1"/>
    <property type="molecule type" value="Genomic_DNA"/>
</dbReference>
<dbReference type="RefSeq" id="WP_012619463.1">
    <property type="nucleotide sequence ID" value="NC_011834.1"/>
</dbReference>
<dbReference type="SMR" id="B8D778"/>
<dbReference type="KEGG" id="bau:BUAPTUC7_172"/>
<dbReference type="HOGENOM" id="CLU_059327_3_0_6"/>
<dbReference type="UniPathway" id="UPA00253">
    <property type="reaction ID" value="UER00333"/>
</dbReference>
<dbReference type="GO" id="GO:0005737">
    <property type="term" value="C:cytoplasm"/>
    <property type="evidence" value="ECO:0007669"/>
    <property type="project" value="InterPro"/>
</dbReference>
<dbReference type="GO" id="GO:0005524">
    <property type="term" value="F:ATP binding"/>
    <property type="evidence" value="ECO:0007669"/>
    <property type="project" value="UniProtKB-UniRule"/>
</dbReference>
<dbReference type="GO" id="GO:0004359">
    <property type="term" value="F:glutaminase activity"/>
    <property type="evidence" value="ECO:0007669"/>
    <property type="project" value="InterPro"/>
</dbReference>
<dbReference type="GO" id="GO:0046872">
    <property type="term" value="F:metal ion binding"/>
    <property type="evidence" value="ECO:0007669"/>
    <property type="project" value="UniProtKB-KW"/>
</dbReference>
<dbReference type="GO" id="GO:0003952">
    <property type="term" value="F:NAD+ synthase (glutamine-hydrolyzing) activity"/>
    <property type="evidence" value="ECO:0007669"/>
    <property type="project" value="InterPro"/>
</dbReference>
<dbReference type="GO" id="GO:0008795">
    <property type="term" value="F:NAD+ synthase activity"/>
    <property type="evidence" value="ECO:0007669"/>
    <property type="project" value="UniProtKB-UniRule"/>
</dbReference>
<dbReference type="GO" id="GO:0009435">
    <property type="term" value="P:NAD biosynthetic process"/>
    <property type="evidence" value="ECO:0007669"/>
    <property type="project" value="UniProtKB-UniRule"/>
</dbReference>
<dbReference type="CDD" id="cd00553">
    <property type="entry name" value="NAD_synthase"/>
    <property type="match status" value="1"/>
</dbReference>
<dbReference type="FunFam" id="3.40.50.620:FF:000015">
    <property type="entry name" value="NH(3)-dependent NAD(+) synthetase"/>
    <property type="match status" value="1"/>
</dbReference>
<dbReference type="Gene3D" id="3.40.50.620">
    <property type="entry name" value="HUPs"/>
    <property type="match status" value="1"/>
</dbReference>
<dbReference type="HAMAP" id="MF_00193">
    <property type="entry name" value="NadE_ammonia_dep"/>
    <property type="match status" value="1"/>
</dbReference>
<dbReference type="InterPro" id="IPR022310">
    <property type="entry name" value="NAD/GMP_synthase"/>
</dbReference>
<dbReference type="InterPro" id="IPR003694">
    <property type="entry name" value="NAD_synthase"/>
</dbReference>
<dbReference type="InterPro" id="IPR022926">
    <property type="entry name" value="NH(3)-dep_NAD(+)_synth"/>
</dbReference>
<dbReference type="InterPro" id="IPR014729">
    <property type="entry name" value="Rossmann-like_a/b/a_fold"/>
</dbReference>
<dbReference type="NCBIfam" id="TIGR00552">
    <property type="entry name" value="nadE"/>
    <property type="match status" value="1"/>
</dbReference>
<dbReference type="NCBIfam" id="NF001979">
    <property type="entry name" value="PRK00768.1"/>
    <property type="match status" value="1"/>
</dbReference>
<dbReference type="PANTHER" id="PTHR23090">
    <property type="entry name" value="NH 3 /GLUTAMINE-DEPENDENT NAD + SYNTHETASE"/>
    <property type="match status" value="1"/>
</dbReference>
<dbReference type="PANTHER" id="PTHR23090:SF7">
    <property type="entry name" value="NH(3)-DEPENDENT NAD(+) SYNTHETASE"/>
    <property type="match status" value="1"/>
</dbReference>
<dbReference type="Pfam" id="PF02540">
    <property type="entry name" value="NAD_synthase"/>
    <property type="match status" value="1"/>
</dbReference>
<dbReference type="SUPFAM" id="SSF52402">
    <property type="entry name" value="Adenine nucleotide alpha hydrolases-like"/>
    <property type="match status" value="1"/>
</dbReference>
<feature type="chain" id="PRO_1000191499" description="NH(3)-dependent NAD(+) synthetase">
    <location>
        <begin position="1"/>
        <end position="268"/>
    </location>
</feature>
<feature type="binding site" evidence="1">
    <location>
        <begin position="46"/>
        <end position="53"/>
    </location>
    <ligand>
        <name>ATP</name>
        <dbReference type="ChEBI" id="CHEBI:30616"/>
    </ligand>
</feature>
<feature type="binding site" evidence="1">
    <location>
        <position position="52"/>
    </location>
    <ligand>
        <name>Mg(2+)</name>
        <dbReference type="ChEBI" id="CHEBI:18420"/>
    </ligand>
</feature>
<feature type="binding site" evidence="1">
    <location>
        <position position="140"/>
    </location>
    <ligand>
        <name>deamido-NAD(+)</name>
        <dbReference type="ChEBI" id="CHEBI:58437"/>
    </ligand>
</feature>
<feature type="binding site" evidence="1">
    <location>
        <position position="160"/>
    </location>
    <ligand>
        <name>ATP</name>
        <dbReference type="ChEBI" id="CHEBI:30616"/>
    </ligand>
</feature>
<feature type="binding site" evidence="1">
    <location>
        <position position="165"/>
    </location>
    <ligand>
        <name>Mg(2+)</name>
        <dbReference type="ChEBI" id="CHEBI:18420"/>
    </ligand>
</feature>
<feature type="binding site" evidence="1">
    <location>
        <position position="173"/>
    </location>
    <ligand>
        <name>deamido-NAD(+)</name>
        <dbReference type="ChEBI" id="CHEBI:58437"/>
    </ligand>
</feature>
<feature type="binding site" evidence="1">
    <location>
        <position position="180"/>
    </location>
    <ligand>
        <name>deamido-NAD(+)</name>
        <dbReference type="ChEBI" id="CHEBI:58437"/>
    </ligand>
</feature>
<feature type="binding site" evidence="1">
    <location>
        <position position="189"/>
    </location>
    <ligand>
        <name>ATP</name>
        <dbReference type="ChEBI" id="CHEBI:30616"/>
    </ligand>
</feature>
<feature type="binding site" evidence="1">
    <location>
        <begin position="260"/>
        <end position="261"/>
    </location>
    <ligand>
        <name>deamido-NAD(+)</name>
        <dbReference type="ChEBI" id="CHEBI:58437"/>
    </ligand>
</feature>
<proteinExistence type="inferred from homology"/>
<organism>
    <name type="scientific">Buchnera aphidicola subsp. Acyrthosiphon pisum (strain Tuc7)</name>
    <dbReference type="NCBI Taxonomy" id="561501"/>
    <lineage>
        <taxon>Bacteria</taxon>
        <taxon>Pseudomonadati</taxon>
        <taxon>Pseudomonadota</taxon>
        <taxon>Gammaproteobacteria</taxon>
        <taxon>Enterobacterales</taxon>
        <taxon>Erwiniaceae</taxon>
        <taxon>Buchnera</taxon>
    </lineage>
</organism>
<evidence type="ECO:0000255" key="1">
    <source>
        <dbReference type="HAMAP-Rule" id="MF_00193"/>
    </source>
</evidence>
<sequence length="268" mass="30444">MTLQKKIIELLGVKPAIIPEIEIKNCVDFLKKYLVNHVHIKSLIVGVSGGQDSTLTAKLCQMTAETLRKEKNDITYQFIALRLPYGIQYDEKDCQDAIRFIQPDQIFNVNIKKAVLSSEKSLKKSGVIISDYVRGNEKARERMKVQYSVAAMKQGLVVGTGHAAENITGFFTKYGDSGTDINPIAKLNKRQIRLLLKNLNCPKHLYLKKPMADLEDEHPQQDDESVLGVTYDVIDSYLEQKKIDIRSQKIIEALYLNTLHKRNLPITQ</sequence>
<accession>B8D778</accession>
<keyword id="KW-0067">ATP-binding</keyword>
<keyword id="KW-0436">Ligase</keyword>
<keyword id="KW-0460">Magnesium</keyword>
<keyword id="KW-0479">Metal-binding</keyword>
<keyword id="KW-0520">NAD</keyword>
<keyword id="KW-0547">Nucleotide-binding</keyword>
<reference key="1">
    <citation type="journal article" date="2009" name="Science">
        <title>The dynamics and time scale of ongoing genomic erosion in symbiotic bacteria.</title>
        <authorList>
            <person name="Moran N.A."/>
            <person name="McLaughlin H.J."/>
            <person name="Sorek R."/>
        </authorList>
    </citation>
    <scope>NUCLEOTIDE SEQUENCE [LARGE SCALE GENOMIC DNA]</scope>
    <source>
        <strain>Tuc7</strain>
    </source>
</reference>
<comment type="function">
    <text evidence="1">Catalyzes the ATP-dependent amidation of deamido-NAD to form NAD. Uses ammonia as a nitrogen source.</text>
</comment>
<comment type="catalytic activity">
    <reaction evidence="1">
        <text>deamido-NAD(+) + NH4(+) + ATP = AMP + diphosphate + NAD(+) + H(+)</text>
        <dbReference type="Rhea" id="RHEA:21188"/>
        <dbReference type="ChEBI" id="CHEBI:15378"/>
        <dbReference type="ChEBI" id="CHEBI:28938"/>
        <dbReference type="ChEBI" id="CHEBI:30616"/>
        <dbReference type="ChEBI" id="CHEBI:33019"/>
        <dbReference type="ChEBI" id="CHEBI:57540"/>
        <dbReference type="ChEBI" id="CHEBI:58437"/>
        <dbReference type="ChEBI" id="CHEBI:456215"/>
        <dbReference type="EC" id="6.3.1.5"/>
    </reaction>
</comment>
<comment type="pathway">
    <text evidence="1">Cofactor biosynthesis; NAD(+) biosynthesis; NAD(+) from deamido-NAD(+) (ammonia route): step 1/1.</text>
</comment>
<comment type="subunit">
    <text evidence="1">Homodimer.</text>
</comment>
<comment type="similarity">
    <text evidence="1">Belongs to the NAD synthetase family.</text>
</comment>
<gene>
    <name evidence="1" type="primary">nadE</name>
    <name type="ordered locus">BUAPTUC7_172</name>
</gene>